<accession>P37789</accession>
<gene>
    <name type="ordered locus">SF2092</name>
    <name type="ordered locus">S2214</name>
</gene>
<protein>
    <recommendedName>
        <fullName>Uncharacterized protein SF2092/S2214</fullName>
    </recommendedName>
    <alternativeName>
        <fullName>ORF12X3</fullName>
    </alternativeName>
</protein>
<keyword id="KW-1185">Reference proteome</keyword>
<dbReference type="EMBL" id="X71970">
    <property type="protein sequence ID" value="CAA50779.1"/>
    <property type="molecule type" value="Genomic_DNA"/>
</dbReference>
<dbReference type="EMBL" id="AE005674">
    <property type="protein sequence ID" value="AAN43631.1"/>
    <property type="molecule type" value="Genomic_DNA"/>
</dbReference>
<dbReference type="EMBL" id="AE014073">
    <property type="protein sequence ID" value="AAP17460.1"/>
    <property type="molecule type" value="Genomic_DNA"/>
</dbReference>
<dbReference type="RefSeq" id="NP_707924.1">
    <property type="nucleotide sequence ID" value="NC_004337.2"/>
</dbReference>
<dbReference type="RefSeq" id="WP_011069433.1">
    <property type="nucleotide sequence ID" value="NZ_UGYS01000001.1"/>
</dbReference>
<dbReference type="STRING" id="198214.SF2092"/>
<dbReference type="PaxDb" id="198214-SF2092"/>
<dbReference type="GeneID" id="1025582"/>
<dbReference type="KEGG" id="sfl:SF2092"/>
<dbReference type="KEGG" id="sfx:S2214"/>
<dbReference type="PATRIC" id="fig|623.156.peg.3790"/>
<dbReference type="HOGENOM" id="CLU_1474236_0_0_6"/>
<dbReference type="Proteomes" id="UP000001006">
    <property type="component" value="Chromosome"/>
</dbReference>
<dbReference type="Proteomes" id="UP000002673">
    <property type="component" value="Chromosome"/>
</dbReference>
<name>Y2092_SHIFL</name>
<sequence>MIAKKRNIQTFLIFSLATILGGIYWYVRSFWISGDPFSPAGGNIFGHYLWNEIDLQVQTAEQARHGISPATLDLQQAINKVGSDVVFYAILSVFTLRNNKILWVFFSIVLTYVLFWFSVTQGDRYLSPIYPLSVLQVAISIASLIKDINITNYKLGRYFILVCIIFFRGDRCILNSNIFILNT</sequence>
<feature type="chain" id="PRO_0000066078" description="Uncharacterized protein SF2092/S2214">
    <location>
        <begin position="1"/>
        <end position="183"/>
    </location>
</feature>
<reference key="1">
    <citation type="journal article" date="1994" name="J. Bacteriol.">
        <title>Characterization of the rfc region of Shigella flexneri.</title>
        <authorList>
            <person name="Morona R."/>
            <person name="Mavris M."/>
            <person name="Fallarino A."/>
            <person name="Manning P.A."/>
        </authorList>
    </citation>
    <scope>NUCLEOTIDE SEQUENCE [GENOMIC DNA]</scope>
    <source>
        <strain>PE577 / Serotype 2a</strain>
    </source>
</reference>
<reference key="2">
    <citation type="journal article" date="2002" name="Nucleic Acids Res.">
        <title>Genome sequence of Shigella flexneri 2a: insights into pathogenicity through comparison with genomes of Escherichia coli K12 and O157.</title>
        <authorList>
            <person name="Jin Q."/>
            <person name="Yuan Z."/>
            <person name="Xu J."/>
            <person name="Wang Y."/>
            <person name="Shen Y."/>
            <person name="Lu W."/>
            <person name="Wang J."/>
            <person name="Liu H."/>
            <person name="Yang J."/>
            <person name="Yang F."/>
            <person name="Zhang X."/>
            <person name="Zhang J."/>
            <person name="Yang G."/>
            <person name="Wu H."/>
            <person name="Qu D."/>
            <person name="Dong J."/>
            <person name="Sun L."/>
            <person name="Xue Y."/>
            <person name="Zhao A."/>
            <person name="Gao Y."/>
            <person name="Zhu J."/>
            <person name="Kan B."/>
            <person name="Ding K."/>
            <person name="Chen S."/>
            <person name="Cheng H."/>
            <person name="Yao Z."/>
            <person name="He B."/>
            <person name="Chen R."/>
            <person name="Ma D."/>
            <person name="Qiang B."/>
            <person name="Wen Y."/>
            <person name="Hou Y."/>
            <person name="Yu J."/>
        </authorList>
    </citation>
    <scope>NUCLEOTIDE SEQUENCE [LARGE SCALE GENOMIC DNA]</scope>
    <source>
        <strain>301 / Serotype 2a</strain>
    </source>
</reference>
<reference key="3">
    <citation type="journal article" date="2003" name="Infect. Immun.">
        <title>Complete genome sequence and comparative genomics of Shigella flexneri serotype 2a strain 2457T.</title>
        <authorList>
            <person name="Wei J."/>
            <person name="Goldberg M.B."/>
            <person name="Burland V."/>
            <person name="Venkatesan M.M."/>
            <person name="Deng W."/>
            <person name="Fournier G."/>
            <person name="Mayhew G.F."/>
            <person name="Plunkett G. III"/>
            <person name="Rose D.J."/>
            <person name="Darling A."/>
            <person name="Mau B."/>
            <person name="Perna N.T."/>
            <person name="Payne S.M."/>
            <person name="Runyen-Janecky L.J."/>
            <person name="Zhou S."/>
            <person name="Schwartz D.C."/>
            <person name="Blattner F.R."/>
        </authorList>
    </citation>
    <scope>NUCLEOTIDE SEQUENCE [LARGE SCALE GENOMIC DNA]</scope>
    <source>
        <strain>ATCC 700930 / 2457T / Serotype 2a</strain>
    </source>
</reference>
<organism>
    <name type="scientific">Shigella flexneri</name>
    <dbReference type="NCBI Taxonomy" id="623"/>
    <lineage>
        <taxon>Bacteria</taxon>
        <taxon>Pseudomonadati</taxon>
        <taxon>Pseudomonadota</taxon>
        <taxon>Gammaproteobacteria</taxon>
        <taxon>Enterobacterales</taxon>
        <taxon>Enterobacteriaceae</taxon>
        <taxon>Shigella</taxon>
    </lineage>
</organism>
<proteinExistence type="predicted"/>